<keyword id="KW-0050">Antiport</keyword>
<keyword id="KW-0997">Cell inner membrane</keyword>
<keyword id="KW-1003">Cell membrane</keyword>
<keyword id="KW-0406">Ion transport</keyword>
<keyword id="KW-0472">Membrane</keyword>
<keyword id="KW-0630">Potassium</keyword>
<keyword id="KW-0633">Potassium transport</keyword>
<keyword id="KW-1185">Reference proteome</keyword>
<keyword id="KW-0812">Transmembrane</keyword>
<keyword id="KW-1133">Transmembrane helix</keyword>
<keyword id="KW-0813">Transport</keyword>
<proteinExistence type="inferred from homology"/>
<evidence type="ECO:0000255" key="1">
    <source>
        <dbReference type="HAMAP-Rule" id="MF_01075"/>
    </source>
</evidence>
<evidence type="ECO:0000305" key="2"/>
<reference key="1">
    <citation type="journal article" date="2005" name="Nucleic Acids Res.">
        <title>Genome dynamics and diversity of Shigella species, the etiologic agents of bacillary dysentery.</title>
        <authorList>
            <person name="Yang F."/>
            <person name="Yang J."/>
            <person name="Zhang X."/>
            <person name="Chen L."/>
            <person name="Jiang Y."/>
            <person name="Yan Y."/>
            <person name="Tang X."/>
            <person name="Wang J."/>
            <person name="Xiong Z."/>
            <person name="Dong J."/>
            <person name="Xue Y."/>
            <person name="Zhu Y."/>
            <person name="Xu X."/>
            <person name="Sun L."/>
            <person name="Chen S."/>
            <person name="Nie H."/>
            <person name="Peng J."/>
            <person name="Xu J."/>
            <person name="Wang Y."/>
            <person name="Yuan Z."/>
            <person name="Wen Y."/>
            <person name="Yao Z."/>
            <person name="Shen Y."/>
            <person name="Qiang B."/>
            <person name="Hou Y."/>
            <person name="Yu J."/>
            <person name="Jin Q."/>
        </authorList>
    </citation>
    <scope>NUCLEOTIDE SEQUENCE [LARGE SCALE GENOMIC DNA]</scope>
    <source>
        <strain>Ss046</strain>
    </source>
</reference>
<protein>
    <recommendedName>
        <fullName evidence="1">K(+)/H(+) antiporter NhaP2</fullName>
    </recommendedName>
    <alternativeName>
        <fullName evidence="1">Potassium/proton antiporter NhaP2</fullName>
    </alternativeName>
</protein>
<sequence length="578" mass="62205">MDATTIISLFILGSILVTSSILLSSFSSRLGIPILVIFLAIGMLAGVDGVGGIPFDNYPFAYMVSNLALAIILLDGGMRTQASSFRVALGPALSLATLGVLITSGLTGMMAAWLFNLDLIEGLLIGAIVGSTDAAAVFSLLGGKGLNERVGSTLEIESGSNDPMAVFLTITLIAMIQQHESSVSWMFVVDILQQFGLGIVIGLGGGYLLLQMINRIALPAGLYPLLALSGGILIFALTTALEGSGILAVYLCGFLLGNRPIRNRYGILQNFDGLAWLAQIAMFLVLGLLVNPSDLLPIAIPALILSAWMIFFARPLSVFAGLLPFRGFNLRERVFISWVGLRGAVPIILAVFPMMAGLENARLFFNVAFFVVLVSLLLQGTSLSWAAKKAKVVVPPVGRPVSRVGLDIHPENPWEQFVYQLSADKWCVGAALRDLHMPKETRIAALFRDNQLLHPTGSTRLREGDVLCVIGRERDLPALGKLFSQSPPVALDQRFFGDFILEASAKYADVALIYGLEDGREYRDKQQTLGEIVQQLLGAAPVVGDQVEFAGMIWTVAEKEDNEVLKIGVRVAEEEAES</sequence>
<gene>
    <name evidence="1" type="primary">nhaP2</name>
    <name type="synonym">cvrA</name>
    <name type="ordered locus">SSON_1183</name>
</gene>
<feature type="chain" id="PRO_0000278154" description="K(+)/H(+) antiporter NhaP2">
    <location>
        <begin position="1"/>
        <end position="578"/>
    </location>
</feature>
<feature type="transmembrane region" description="Helical" evidence="1">
    <location>
        <begin position="6"/>
        <end position="26"/>
    </location>
</feature>
<feature type="transmembrane region" description="Helical" evidence="1">
    <location>
        <begin position="30"/>
        <end position="50"/>
    </location>
</feature>
<feature type="transmembrane region" description="Helical" evidence="1">
    <location>
        <begin position="58"/>
        <end position="78"/>
    </location>
</feature>
<feature type="transmembrane region" description="Helical" evidence="1">
    <location>
        <begin position="87"/>
        <end position="107"/>
    </location>
</feature>
<feature type="transmembrane region" description="Helical" evidence="1">
    <location>
        <begin position="109"/>
        <end position="129"/>
    </location>
</feature>
<feature type="transmembrane region" description="Helical" evidence="1">
    <location>
        <begin position="156"/>
        <end position="176"/>
    </location>
</feature>
<feature type="transmembrane region" description="Helical" evidence="1">
    <location>
        <begin position="185"/>
        <end position="205"/>
    </location>
</feature>
<feature type="transmembrane region" description="Helical" evidence="1">
    <location>
        <begin position="216"/>
        <end position="236"/>
    </location>
</feature>
<feature type="transmembrane region" description="Helical" evidence="1">
    <location>
        <begin position="237"/>
        <end position="257"/>
    </location>
</feature>
<feature type="transmembrane region" description="Helical" evidence="1">
    <location>
        <begin position="270"/>
        <end position="290"/>
    </location>
</feature>
<feature type="transmembrane region" description="Helical" evidence="1">
    <location>
        <begin position="293"/>
        <end position="313"/>
    </location>
</feature>
<feature type="transmembrane region" description="Helical" evidence="1">
    <location>
        <begin position="334"/>
        <end position="354"/>
    </location>
</feature>
<feature type="transmembrane region" description="Helical" evidence="1">
    <location>
        <begin position="363"/>
        <end position="383"/>
    </location>
</feature>
<feature type="domain" description="RCK C-terminal" evidence="1">
    <location>
        <begin position="403"/>
        <end position="485"/>
    </location>
</feature>
<name>NHAP2_SHISS</name>
<dbReference type="EMBL" id="CP000038">
    <property type="protein sequence ID" value="AAZ87905.1"/>
    <property type="status" value="ALT_INIT"/>
    <property type="molecule type" value="Genomic_DNA"/>
</dbReference>
<dbReference type="RefSeq" id="WP_000340206.1">
    <property type="nucleotide sequence ID" value="NC_007384.1"/>
</dbReference>
<dbReference type="SMR" id="Q3Z2V7"/>
<dbReference type="KEGG" id="ssn:SSON_1183"/>
<dbReference type="HOGENOM" id="CLU_005912_9_2_6"/>
<dbReference type="Proteomes" id="UP000002529">
    <property type="component" value="Chromosome"/>
</dbReference>
<dbReference type="GO" id="GO:0005886">
    <property type="term" value="C:plasma membrane"/>
    <property type="evidence" value="ECO:0007669"/>
    <property type="project" value="UniProtKB-SubCell"/>
</dbReference>
<dbReference type="GO" id="GO:0050660">
    <property type="term" value="F:flavin adenine dinucleotide binding"/>
    <property type="evidence" value="ECO:0007669"/>
    <property type="project" value="InterPro"/>
</dbReference>
<dbReference type="GO" id="GO:0015386">
    <property type="term" value="F:potassium:proton antiporter activity"/>
    <property type="evidence" value="ECO:0007669"/>
    <property type="project" value="UniProtKB-UniRule"/>
</dbReference>
<dbReference type="GO" id="GO:0006884">
    <property type="term" value="P:cell volume homeostasis"/>
    <property type="evidence" value="ECO:0007669"/>
    <property type="project" value="InterPro"/>
</dbReference>
<dbReference type="FunFam" id="1.20.1530.20:FF:000002">
    <property type="entry name" value="K(+)/H(+) antiporter NhaP2"/>
    <property type="match status" value="1"/>
</dbReference>
<dbReference type="FunFam" id="3.30.465.10:FF:000009">
    <property type="entry name" value="K(+)/H(+) antiporter NhaP2"/>
    <property type="match status" value="1"/>
</dbReference>
<dbReference type="FunFam" id="3.30.70.1450:FF:000007">
    <property type="entry name" value="K(+)/H(+) antiporter NhaP2"/>
    <property type="match status" value="1"/>
</dbReference>
<dbReference type="Gene3D" id="1.20.1530.20">
    <property type="match status" value="1"/>
</dbReference>
<dbReference type="Gene3D" id="3.30.465.10">
    <property type="match status" value="1"/>
</dbReference>
<dbReference type="Gene3D" id="3.30.70.1450">
    <property type="entry name" value="Regulator of K+ conductance, C-terminal domain"/>
    <property type="match status" value="1"/>
</dbReference>
<dbReference type="HAMAP" id="MF_01075">
    <property type="entry name" value="NhaP2"/>
    <property type="match status" value="1"/>
</dbReference>
<dbReference type="InterPro" id="IPR006153">
    <property type="entry name" value="Cation/H_exchanger_TM"/>
</dbReference>
<dbReference type="InterPro" id="IPR036318">
    <property type="entry name" value="FAD-bd_PCMH-like_sf"/>
</dbReference>
<dbReference type="InterPro" id="IPR016169">
    <property type="entry name" value="FAD-bd_PCMH_sub2"/>
</dbReference>
<dbReference type="InterPro" id="IPR038770">
    <property type="entry name" value="Na+/solute_symporter_sf"/>
</dbReference>
<dbReference type="InterPro" id="IPR023729">
    <property type="entry name" value="NhaP2"/>
</dbReference>
<dbReference type="InterPro" id="IPR006037">
    <property type="entry name" value="RCK_C"/>
</dbReference>
<dbReference type="InterPro" id="IPR036721">
    <property type="entry name" value="RCK_C_sf"/>
</dbReference>
<dbReference type="InterPro" id="IPR005170">
    <property type="entry name" value="Transptr-assoc_dom"/>
</dbReference>
<dbReference type="NCBIfam" id="NF003714">
    <property type="entry name" value="PRK05326.1-1"/>
    <property type="match status" value="1"/>
</dbReference>
<dbReference type="NCBIfam" id="NF003715">
    <property type="entry name" value="PRK05326.1-2"/>
    <property type="match status" value="1"/>
</dbReference>
<dbReference type="NCBIfam" id="NF003716">
    <property type="entry name" value="PRK05326.1-3"/>
    <property type="match status" value="1"/>
</dbReference>
<dbReference type="PANTHER" id="PTHR32507:SF7">
    <property type="entry name" value="K(+)_H(+) ANTIPORTER NHAP2"/>
    <property type="match status" value="1"/>
</dbReference>
<dbReference type="PANTHER" id="PTHR32507">
    <property type="entry name" value="NA(+)/H(+) ANTIPORTER 1"/>
    <property type="match status" value="1"/>
</dbReference>
<dbReference type="Pfam" id="PF03471">
    <property type="entry name" value="CorC_HlyC"/>
    <property type="match status" value="1"/>
</dbReference>
<dbReference type="Pfam" id="PF00999">
    <property type="entry name" value="Na_H_Exchanger"/>
    <property type="match status" value="1"/>
</dbReference>
<dbReference type="Pfam" id="PF02080">
    <property type="entry name" value="TrkA_C"/>
    <property type="match status" value="1"/>
</dbReference>
<dbReference type="SMART" id="SM01091">
    <property type="entry name" value="CorC_HlyC"/>
    <property type="match status" value="1"/>
</dbReference>
<dbReference type="SUPFAM" id="SSF56176">
    <property type="entry name" value="FAD-binding/transporter-associated domain-like"/>
    <property type="match status" value="1"/>
</dbReference>
<dbReference type="SUPFAM" id="SSF116726">
    <property type="entry name" value="TrkA C-terminal domain-like"/>
    <property type="match status" value="1"/>
</dbReference>
<dbReference type="PROSITE" id="PS51202">
    <property type="entry name" value="RCK_C"/>
    <property type="match status" value="1"/>
</dbReference>
<organism>
    <name type="scientific">Shigella sonnei (strain Ss046)</name>
    <dbReference type="NCBI Taxonomy" id="300269"/>
    <lineage>
        <taxon>Bacteria</taxon>
        <taxon>Pseudomonadati</taxon>
        <taxon>Pseudomonadota</taxon>
        <taxon>Gammaproteobacteria</taxon>
        <taxon>Enterobacterales</taxon>
        <taxon>Enterobacteriaceae</taxon>
        <taxon>Shigella</taxon>
    </lineage>
</organism>
<comment type="function">
    <text evidence="1">K(+)/H(+) antiporter that extrudes potassium in exchange for external protons and maintains the internal concentration of potassium under toxic levels.</text>
</comment>
<comment type="catalytic activity">
    <reaction evidence="1">
        <text>K(+)(in) + H(+)(out) = K(+)(out) + H(+)(in)</text>
        <dbReference type="Rhea" id="RHEA:29467"/>
        <dbReference type="ChEBI" id="CHEBI:15378"/>
        <dbReference type="ChEBI" id="CHEBI:29103"/>
    </reaction>
    <physiologicalReaction direction="left-to-right" evidence="1">
        <dbReference type="Rhea" id="RHEA:29468"/>
    </physiologicalReaction>
</comment>
<comment type="subcellular location">
    <subcellularLocation>
        <location evidence="1">Cell inner membrane</location>
        <topology evidence="1">Multi-pass membrane protein</topology>
    </subcellularLocation>
</comment>
<comment type="similarity">
    <text evidence="1">Belongs to the monovalent cation:proton antiporter 1 (CPA1) transporter (TC 2.A.36) family. NhaP2 subfamily.</text>
</comment>
<comment type="sequence caution" evidence="2">
    <conflict type="erroneous initiation">
        <sequence resource="EMBL-CDS" id="AAZ87905"/>
    </conflict>
</comment>
<accession>Q3Z2V7</accession>